<proteinExistence type="evidence at protein level"/>
<protein>
    <recommendedName>
        <fullName evidence="17">Reducing polyketide synthase hmp8</fullName>
        <shortName evidence="17">R-PKS hmp8</shortName>
        <ecNumber evidence="8 11 12 13">2.3.1.-</ecNumber>
    </recommendedName>
    <alternativeName>
        <fullName evidence="17">Hypothemycin biosynthesis cluster protein hpm8</fullName>
    </alternativeName>
</protein>
<dbReference type="EC" id="2.3.1.-" evidence="8 11 12 13"/>
<dbReference type="EMBL" id="EU520418">
    <property type="protein sequence ID" value="ACD39767.1"/>
    <property type="molecule type" value="Genomic_DNA"/>
</dbReference>
<dbReference type="SMR" id="B3FWT3"/>
<dbReference type="GO" id="GO:0004312">
    <property type="term" value="F:fatty acid synthase activity"/>
    <property type="evidence" value="ECO:0007669"/>
    <property type="project" value="TreeGrafter"/>
</dbReference>
<dbReference type="GO" id="GO:0016491">
    <property type="term" value="F:oxidoreductase activity"/>
    <property type="evidence" value="ECO:0007669"/>
    <property type="project" value="UniProtKB-KW"/>
</dbReference>
<dbReference type="GO" id="GO:0031177">
    <property type="term" value="F:phosphopantetheine binding"/>
    <property type="evidence" value="ECO:0007669"/>
    <property type="project" value="InterPro"/>
</dbReference>
<dbReference type="GO" id="GO:0008270">
    <property type="term" value="F:zinc ion binding"/>
    <property type="evidence" value="ECO:0007669"/>
    <property type="project" value="InterPro"/>
</dbReference>
<dbReference type="GO" id="GO:0006633">
    <property type="term" value="P:fatty acid biosynthetic process"/>
    <property type="evidence" value="ECO:0007669"/>
    <property type="project" value="TreeGrafter"/>
</dbReference>
<dbReference type="GO" id="GO:0044550">
    <property type="term" value="P:secondary metabolite biosynthetic process"/>
    <property type="evidence" value="ECO:0007669"/>
    <property type="project" value="TreeGrafter"/>
</dbReference>
<dbReference type="CDD" id="cd05195">
    <property type="entry name" value="enoyl_red"/>
    <property type="match status" value="1"/>
</dbReference>
<dbReference type="CDD" id="cd00833">
    <property type="entry name" value="PKS"/>
    <property type="match status" value="1"/>
</dbReference>
<dbReference type="FunFam" id="3.40.50.720:FF:000209">
    <property type="entry name" value="Polyketide synthase Pks12"/>
    <property type="match status" value="1"/>
</dbReference>
<dbReference type="Gene3D" id="3.40.47.10">
    <property type="match status" value="1"/>
</dbReference>
<dbReference type="Gene3D" id="1.10.1200.10">
    <property type="entry name" value="ACP-like"/>
    <property type="match status" value="1"/>
</dbReference>
<dbReference type="Gene3D" id="3.40.366.10">
    <property type="entry name" value="Malonyl-Coenzyme A Acyl Carrier Protein, domain 2"/>
    <property type="match status" value="1"/>
</dbReference>
<dbReference type="Gene3D" id="3.90.180.10">
    <property type="entry name" value="Medium-chain alcohol dehydrogenases, catalytic domain"/>
    <property type="match status" value="1"/>
</dbReference>
<dbReference type="Gene3D" id="3.40.50.720">
    <property type="entry name" value="NAD(P)-binding Rossmann-like Domain"/>
    <property type="match status" value="1"/>
</dbReference>
<dbReference type="Gene3D" id="3.10.129.110">
    <property type="entry name" value="Polyketide synthase dehydratase"/>
    <property type="match status" value="1"/>
</dbReference>
<dbReference type="InterPro" id="IPR001227">
    <property type="entry name" value="Ac_transferase_dom_sf"/>
</dbReference>
<dbReference type="InterPro" id="IPR036736">
    <property type="entry name" value="ACP-like_sf"/>
</dbReference>
<dbReference type="InterPro" id="IPR014043">
    <property type="entry name" value="Acyl_transferase_dom"/>
</dbReference>
<dbReference type="InterPro" id="IPR016035">
    <property type="entry name" value="Acyl_Trfase/lysoPLipase"/>
</dbReference>
<dbReference type="InterPro" id="IPR013154">
    <property type="entry name" value="ADH-like_N"/>
</dbReference>
<dbReference type="InterPro" id="IPR011032">
    <property type="entry name" value="GroES-like_sf"/>
</dbReference>
<dbReference type="InterPro" id="IPR014031">
    <property type="entry name" value="Ketoacyl_synth_C"/>
</dbReference>
<dbReference type="InterPro" id="IPR014030">
    <property type="entry name" value="Ketoacyl_synth_N"/>
</dbReference>
<dbReference type="InterPro" id="IPR016036">
    <property type="entry name" value="Malonyl_transacylase_ACP-bd"/>
</dbReference>
<dbReference type="InterPro" id="IPR036291">
    <property type="entry name" value="NAD(P)-bd_dom_sf"/>
</dbReference>
<dbReference type="InterPro" id="IPR032821">
    <property type="entry name" value="PKS_assoc"/>
</dbReference>
<dbReference type="InterPro" id="IPR020841">
    <property type="entry name" value="PKS_Beta-ketoAc_synthase_dom"/>
</dbReference>
<dbReference type="InterPro" id="IPR042104">
    <property type="entry name" value="PKS_dehydratase_sf"/>
</dbReference>
<dbReference type="InterPro" id="IPR020807">
    <property type="entry name" value="PKS_DH"/>
</dbReference>
<dbReference type="InterPro" id="IPR049551">
    <property type="entry name" value="PKS_DH_C"/>
</dbReference>
<dbReference type="InterPro" id="IPR049552">
    <property type="entry name" value="PKS_DH_N"/>
</dbReference>
<dbReference type="InterPro" id="IPR020843">
    <property type="entry name" value="PKS_ER"/>
</dbReference>
<dbReference type="InterPro" id="IPR013968">
    <property type="entry name" value="PKS_KR"/>
</dbReference>
<dbReference type="InterPro" id="IPR049900">
    <property type="entry name" value="PKS_mFAS_DH"/>
</dbReference>
<dbReference type="InterPro" id="IPR050091">
    <property type="entry name" value="PKS_NRPS_Biosynth_Enz"/>
</dbReference>
<dbReference type="InterPro" id="IPR020806">
    <property type="entry name" value="PKS_PP-bd"/>
</dbReference>
<dbReference type="InterPro" id="IPR009081">
    <property type="entry name" value="PP-bd_ACP"/>
</dbReference>
<dbReference type="InterPro" id="IPR006162">
    <property type="entry name" value="Ppantetheine_attach_site"/>
</dbReference>
<dbReference type="InterPro" id="IPR002364">
    <property type="entry name" value="Quin_OxRdtase/zeta-crystal_CS"/>
</dbReference>
<dbReference type="InterPro" id="IPR016039">
    <property type="entry name" value="Thiolase-like"/>
</dbReference>
<dbReference type="PANTHER" id="PTHR43775:SF29">
    <property type="entry name" value="ASPERFURANONE POLYKETIDE SYNTHASE AFOG-RELATED"/>
    <property type="match status" value="1"/>
</dbReference>
<dbReference type="PANTHER" id="PTHR43775">
    <property type="entry name" value="FATTY ACID SYNTHASE"/>
    <property type="match status" value="1"/>
</dbReference>
<dbReference type="Pfam" id="PF23297">
    <property type="entry name" value="ACP_SdgA_C"/>
    <property type="match status" value="1"/>
</dbReference>
<dbReference type="Pfam" id="PF00698">
    <property type="entry name" value="Acyl_transf_1"/>
    <property type="match status" value="1"/>
</dbReference>
<dbReference type="Pfam" id="PF08240">
    <property type="entry name" value="ADH_N"/>
    <property type="match status" value="1"/>
</dbReference>
<dbReference type="Pfam" id="PF13602">
    <property type="entry name" value="ADH_zinc_N_2"/>
    <property type="match status" value="1"/>
</dbReference>
<dbReference type="Pfam" id="PF16197">
    <property type="entry name" value="KAsynt_C_assoc"/>
    <property type="match status" value="1"/>
</dbReference>
<dbReference type="Pfam" id="PF00109">
    <property type="entry name" value="ketoacyl-synt"/>
    <property type="match status" value="1"/>
</dbReference>
<dbReference type="Pfam" id="PF02801">
    <property type="entry name" value="Ketoacyl-synt_C"/>
    <property type="match status" value="1"/>
</dbReference>
<dbReference type="Pfam" id="PF08659">
    <property type="entry name" value="KR"/>
    <property type="match status" value="1"/>
</dbReference>
<dbReference type="Pfam" id="PF21089">
    <property type="entry name" value="PKS_DH_N"/>
    <property type="match status" value="1"/>
</dbReference>
<dbReference type="Pfam" id="PF14765">
    <property type="entry name" value="PS-DH"/>
    <property type="match status" value="1"/>
</dbReference>
<dbReference type="SMART" id="SM00827">
    <property type="entry name" value="PKS_AT"/>
    <property type="match status" value="1"/>
</dbReference>
<dbReference type="SMART" id="SM00826">
    <property type="entry name" value="PKS_DH"/>
    <property type="match status" value="1"/>
</dbReference>
<dbReference type="SMART" id="SM00829">
    <property type="entry name" value="PKS_ER"/>
    <property type="match status" value="1"/>
</dbReference>
<dbReference type="SMART" id="SM00822">
    <property type="entry name" value="PKS_KR"/>
    <property type="match status" value="1"/>
</dbReference>
<dbReference type="SMART" id="SM00825">
    <property type="entry name" value="PKS_KS"/>
    <property type="match status" value="1"/>
</dbReference>
<dbReference type="SMART" id="SM00823">
    <property type="entry name" value="PKS_PP"/>
    <property type="match status" value="1"/>
</dbReference>
<dbReference type="SUPFAM" id="SSF47336">
    <property type="entry name" value="ACP-like"/>
    <property type="match status" value="1"/>
</dbReference>
<dbReference type="SUPFAM" id="SSF52151">
    <property type="entry name" value="FabD/lysophospholipase-like"/>
    <property type="match status" value="1"/>
</dbReference>
<dbReference type="SUPFAM" id="SSF50129">
    <property type="entry name" value="GroES-like"/>
    <property type="match status" value="1"/>
</dbReference>
<dbReference type="SUPFAM" id="SSF51735">
    <property type="entry name" value="NAD(P)-binding Rossmann-fold domains"/>
    <property type="match status" value="2"/>
</dbReference>
<dbReference type="SUPFAM" id="SSF55048">
    <property type="entry name" value="Probable ACP-binding domain of malonyl-CoA ACP transacylase"/>
    <property type="match status" value="1"/>
</dbReference>
<dbReference type="SUPFAM" id="SSF53901">
    <property type="entry name" value="Thiolase-like"/>
    <property type="match status" value="1"/>
</dbReference>
<dbReference type="PROSITE" id="PS50075">
    <property type="entry name" value="CARRIER"/>
    <property type="match status" value="1"/>
</dbReference>
<dbReference type="PROSITE" id="PS52004">
    <property type="entry name" value="KS3_2"/>
    <property type="match status" value="1"/>
</dbReference>
<dbReference type="PROSITE" id="PS00012">
    <property type="entry name" value="PHOSPHOPANTETHEINE"/>
    <property type="match status" value="1"/>
</dbReference>
<dbReference type="PROSITE" id="PS52019">
    <property type="entry name" value="PKS_MFAS_DH"/>
    <property type="match status" value="1"/>
</dbReference>
<dbReference type="PROSITE" id="PS01162">
    <property type="entry name" value="QOR_ZETA_CRYSTAL"/>
    <property type="match status" value="1"/>
</dbReference>
<organism>
    <name type="scientific">Hypomyces subiculosus</name>
    <name type="common">Nectria subiculosa</name>
    <dbReference type="NCBI Taxonomy" id="193393"/>
    <lineage>
        <taxon>Eukaryota</taxon>
        <taxon>Fungi</taxon>
        <taxon>Dikarya</taxon>
        <taxon>Ascomycota</taxon>
        <taxon>Pezizomycotina</taxon>
        <taxon>Sordariomycetes</taxon>
        <taxon>Hypocreomycetidae</taxon>
        <taxon>Hypocreales</taxon>
        <taxon>Hypocreaceae</taxon>
        <taxon>Hypomyces</taxon>
    </lineage>
</organism>
<comment type="function">
    <text evidence="8 11 12 13">Reducing polyketide synthase; part of the gene cluster that mediates the biosynthesis of hypothemycin, a resorcylic acid lactone (RAL) that irreversibly inhibits a subset of protein kinases with a conserved cysteine in the ATP binding site such as human ERK2 (PubMed:18567690, PubMed:20222707, PubMed:22406519, PubMed:23356934). The first step is performed by both PKSs hmp3 and hmp8 and leads to the production of 7',8'-dehydrozearalenol (DHZ) (PubMed:18567690, PubMed:20222707). The highly reducing PKS hpm8 synthesizes the reduced hexaketide (7S,11S,2E,8E)-7,11-dihydroxy-dodeca-2,8-dienoate, which is transferred downstream to the non-reducing PKS hpm3 (PubMed:20222707, PubMed:22406519, PubMed:23356934). Hpm3 then extends the reduced hexaketide to a nonaketide, after which regioselective cyclization and macrolactonization affords DHZ (PubMed:20222707, PubMed:22406519, PubMed:23356934). The next step is the conversion of DHZ into aigialomycin C and is performed by the O-methyltransferase hmp5, the FAD-binding monooxygenase hmp7, and the cytochrome P450 monooxygenase hmp1 (PubMed:18567690). The wide substrate tolerance of the hmp5 and hmp7 implies that the reactions from DHZ to aigialomycin C can occur in any order (PubMed:18567690). The steps from aigialomycin C to hypothemycin are less well established (PubMed:18567690). The FAD-linked oxidoreductase hmp9 presumably catalyzes oxidation of the C-6' hydroxyl to a ketone (PubMed:18567690). The timing of this oxidation is important, since the resulting enone functional group is a Michael acceptor that can react spontaneously with glutathione, an abundant metabolite in fungal cells (PubMed:18567690). The glutathione S-transferase hmp2 catalyzes cis-trans isomerization of the 7',8' double bond with equilibrium favoring the trans isomer (PubMed:18567690). The hpm6-encoded transporter might preferentially pump hypothemycin out of the cell relative to the trans isomer aigialomycin A. The cis-to-trans isomerization may be coupled with C-4' hydroxylation, since all known hypothemycin analogs containing the enone functional group also have hydroxyl groups at both C-4' and C-5' (PubMed:18567690).</text>
</comment>
<comment type="pathway">
    <text evidence="8">Secondary metabolite biosynthesis.</text>
</comment>
<comment type="domain">
    <text evidence="12">The ketoreductase domain catalyzes five beta-ketoreduction steps involving substrates ranging in size from diketide to hexaketide and possesses a previously unrecognized ability to reduce the beta-ketoacyl intermediates with different stereochemical outcomes based on substrate chain length (PubMed:22406519).</text>
</comment>
<comment type="biotechnology">
    <text evidence="5 6 7 9 10 14 15 16">Hypothemycin is an antifungal agent that exhibits excellent activity against Peronophythora litchii, which could be helpful for the storage of harvest litchi fruit (PubMed:24106914). Hypothemycin is a strong inhibitor of a subset of MAP kinases such as human ERK2 (PubMed:18571434, PubMed:20118535, PubMed:26371861). It can therefore be used as an anti-cancer drug thanks to its inhibitory activity of Ras-mediated cellular signals (PubMed:10421424, PubMed:10595743). It can also inhibit Trypanosoma brucei kinase TbCLK1 which is a good candidate as a therapeutic target for African trypanosomiasis (PubMed:23853713). Finally, hypothemycin also has inhibitor activity of T cell activation (PubMed:10598882).</text>
</comment>
<evidence type="ECO:0000255" key="1"/>
<evidence type="ECO:0000255" key="2">
    <source>
        <dbReference type="PROSITE-ProRule" id="PRU00258"/>
    </source>
</evidence>
<evidence type="ECO:0000255" key="3">
    <source>
        <dbReference type="PROSITE-ProRule" id="PRU01348"/>
    </source>
</evidence>
<evidence type="ECO:0000255" key="4">
    <source>
        <dbReference type="PROSITE-ProRule" id="PRU01363"/>
    </source>
</evidence>
<evidence type="ECO:0000269" key="5">
    <source>
    </source>
</evidence>
<evidence type="ECO:0000269" key="6">
    <source>
    </source>
</evidence>
<evidence type="ECO:0000269" key="7">
    <source>
    </source>
</evidence>
<evidence type="ECO:0000269" key="8">
    <source>
    </source>
</evidence>
<evidence type="ECO:0000269" key="9">
    <source>
    </source>
</evidence>
<evidence type="ECO:0000269" key="10">
    <source>
    </source>
</evidence>
<evidence type="ECO:0000269" key="11">
    <source>
    </source>
</evidence>
<evidence type="ECO:0000269" key="12">
    <source>
    </source>
</evidence>
<evidence type="ECO:0000269" key="13">
    <source>
    </source>
</evidence>
<evidence type="ECO:0000269" key="14">
    <source>
    </source>
</evidence>
<evidence type="ECO:0000269" key="15">
    <source>
    </source>
</evidence>
<evidence type="ECO:0000269" key="16">
    <source>
    </source>
</evidence>
<evidence type="ECO:0000303" key="17">
    <source>
    </source>
</evidence>
<accession>B3FWT3</accession>
<keyword id="KW-0012">Acyltransferase</keyword>
<keyword id="KW-0511">Multifunctional enzyme</keyword>
<keyword id="KW-0521">NADP</keyword>
<keyword id="KW-0560">Oxidoreductase</keyword>
<keyword id="KW-0596">Phosphopantetheine</keyword>
<keyword id="KW-0597">Phosphoprotein</keyword>
<keyword id="KW-0808">Transferase</keyword>
<name>HPM8_HYPSB</name>
<feature type="chain" id="PRO_0000437585" description="Reducing polyketide synthase hmp8">
    <location>
        <begin position="1"/>
        <end position="2349"/>
    </location>
</feature>
<feature type="domain" description="Ketosynthase family 3 (KS3)" evidence="3">
    <location>
        <begin position="9"/>
        <end position="435"/>
    </location>
</feature>
<feature type="domain" description="PKS/mFAS DH" evidence="4">
    <location>
        <begin position="930"/>
        <end position="1250"/>
    </location>
</feature>
<feature type="domain" description="Carrier" evidence="2">
    <location>
        <begin position="2267"/>
        <end position="2344"/>
    </location>
</feature>
<feature type="region of interest" description="Malonyl-CoA:ACP transacylase (MAT) domain" evidence="1">
    <location>
        <begin position="551"/>
        <end position="856"/>
    </location>
</feature>
<feature type="region of interest" description="N-terminal hotdog fold" evidence="4">
    <location>
        <begin position="930"/>
        <end position="1066"/>
    </location>
</feature>
<feature type="region of interest" description="Dehydratase (DH) domain" evidence="1">
    <location>
        <begin position="932"/>
        <end position="1244"/>
    </location>
</feature>
<feature type="region of interest" description="C-terminal hotdog fold" evidence="4">
    <location>
        <begin position="1094"/>
        <end position="1250"/>
    </location>
</feature>
<feature type="region of interest" description="Enoyl reductase (ER) domain" evidence="1">
    <location>
        <begin position="1641"/>
        <end position="1953"/>
    </location>
</feature>
<feature type="region of interest" description="Ketoreductase (KR) domain" evidence="1">
    <location>
        <begin position="1977"/>
        <end position="2157"/>
    </location>
</feature>
<feature type="active site" description="For beta-ketoacyl synthase activity" evidence="3">
    <location>
        <position position="182"/>
    </location>
</feature>
<feature type="active site" description="For beta-ketoacyl synthase activity" evidence="3">
    <location>
        <position position="317"/>
    </location>
</feature>
<feature type="active site" description="For beta-ketoacyl synthase activity" evidence="3">
    <location>
        <position position="357"/>
    </location>
</feature>
<feature type="active site" description="Proton acceptor; for dehydratase activity" evidence="4">
    <location>
        <position position="962"/>
    </location>
</feature>
<feature type="active site" description="Proton donor; for dehydratase activity" evidence="4">
    <location>
        <position position="1160"/>
    </location>
</feature>
<feature type="modified residue" description="O-(pantetheine 4'-phosphoryl)serine" evidence="2">
    <location>
        <position position="2304"/>
    </location>
</feature>
<reference key="1">
    <citation type="journal article" date="2008" name="Appl. Environ. Microbiol.">
        <title>Genes for the biosynthesis of the fungal polyketides hypothemycin from Hypomyces subiculosus and radicicol from Pochonia chlamydosporia.</title>
        <authorList>
            <person name="Reeves C.D."/>
            <person name="Hu Z."/>
            <person name="Reid R."/>
            <person name="Kealey J.T."/>
        </authorList>
    </citation>
    <scope>NUCLEOTIDE SEQUENCE [GENOMIC DNA]</scope>
    <scope>FUNCTION</scope>
    <scope>CATALYTIC ACTIVITY</scope>
    <source>
        <strain>DSM11931</strain>
    </source>
</reference>
<reference key="2">
    <citation type="journal article" date="1999" name="Immunopharmacology">
        <title>Hypothemycin inhibits the proliferative response and modulates the production of cytokines during T cell activation.</title>
        <authorList>
            <person name="Camacho R."/>
            <person name="Staruch M.J."/>
            <person name="DaSilva C."/>
            <person name="Koprak S."/>
            <person name="Sewell T."/>
            <person name="Salituro G."/>
            <person name="Dumont F.J."/>
        </authorList>
    </citation>
    <scope>BIOTECHNOLOGY</scope>
</reference>
<reference key="3">
    <citation type="journal article" date="1999" name="Jpn. J. Cancer Res.">
        <title>Antitumor efficacy of hypothemycin, a new Ras-signaling inhibitor.</title>
        <authorList>
            <person name="Tanaka H."/>
            <person name="Nishida K."/>
            <person name="Sugita K."/>
            <person name="Yoshioka T."/>
        </authorList>
    </citation>
    <scope>BIOTECHNOLOGY</scope>
</reference>
<reference key="4">
    <citation type="journal article" date="1999" name="Life Sci.">
        <title>Suppression of oncogenic transformation by hypothemycin associated with accelerated cyclin D1 degradation through ubiquitin-proteasome pathway.</title>
        <authorList>
            <person name="Sonoda H."/>
            <person name="Omi K."/>
            <person name="Hojo K."/>
            <person name="Nishida K."/>
            <person name="Omura S."/>
            <person name="Sugita K."/>
        </authorList>
    </citation>
    <scope>BIOTECHNOLOGY</scope>
</reference>
<reference key="5">
    <citation type="journal article" date="2008" name="J. Struct. Biol.">
        <title>Molecular modeling and crystal structure of ERK2-hypothemycin complexes.</title>
        <authorList>
            <person name="Rastelli G."/>
            <person name="Rosenfeld R."/>
            <person name="Reid R."/>
            <person name="Santi D.V."/>
        </authorList>
    </citation>
    <scope>BIOTECHNOLOGY</scope>
</reference>
<reference key="6">
    <citation type="journal article" date="2010" name="Biol. Pharm. Bull.">
        <title>The resorcylic acid lactone hypothemycin selectively inhibits the mitogen-activated protein kinase kinase-extracellular signal-regulated kinase pathway in cells.</title>
        <authorList>
            <person name="Fukazawa H."/>
            <person name="Ikeda Y."/>
            <person name="Fukuyama M."/>
            <person name="Suzuki T."/>
            <person name="Hori H."/>
            <person name="Okuda T."/>
            <person name="Uehara Y."/>
        </authorList>
    </citation>
    <scope>BIOTECHNOLOGY</scope>
</reference>
<reference key="7">
    <citation type="journal article" date="2010" name="J. Am. Chem. Soc.">
        <title>Enzymatic synthesis of resorcylic acid lactones by cooperation of fungal iterative polyketide synthases involved in hypothemycin biosynthesis.</title>
        <authorList>
            <person name="Zhou H."/>
            <person name="Qiao K."/>
            <person name="Gao Z."/>
            <person name="Meehan M.J."/>
            <person name="Li J.W."/>
            <person name="Zhao X."/>
            <person name="Dorrestein P.C."/>
            <person name="Vederas J.C."/>
            <person name="Tang Y."/>
        </authorList>
    </citation>
    <scope>FUNCTION</scope>
    <scope>CATALYTIC ACTIVITY</scope>
</reference>
<reference key="8">
    <citation type="journal article" date="2012" name="Nat. Chem. Biol.">
        <title>A fungal ketoreductase domain that displays substrate-dependent stereospecificity.</title>
        <authorList>
            <person name="Zhou H."/>
            <person name="Gao Z."/>
            <person name="Qiao K."/>
            <person name="Wang J."/>
            <person name="Vederas J.C."/>
            <person name="Tang Y."/>
        </authorList>
    </citation>
    <scope>FUNCTION</scope>
    <scope>CATALYTIC ACTIVITY</scope>
    <scope>DOMAIN</scope>
</reference>
<reference key="9">
    <citation type="journal article" date="2013" name="Elife">
        <title>Hypothemycin, a fungal natural product, identifies therapeutic targets in Trypanosoma brucei [corrected].</title>
        <authorList>
            <person name="Nishino M."/>
            <person name="Choy J.W."/>
            <person name="Gushwa N.N."/>
            <person name="Oses-Prieto J.A."/>
            <person name="Koupparis K."/>
            <person name="Burlingame A.L."/>
            <person name="Renslo A.R."/>
            <person name="McKerrow J.H."/>
            <person name="Taunton J."/>
        </authorList>
    </citation>
    <scope>BIOTECHNOLOGY</scope>
</reference>
<reference key="10">
    <citation type="journal article" date="2013" name="J. Agric. Food Chem.">
        <title>Antifungal activity of hypothemycin against Peronophythora litchii in vitro and in vivo.</title>
        <authorList>
            <person name="Xu L."/>
            <person name="Xue J."/>
            <person name="Wu P."/>
            <person name="Wang D."/>
            <person name="Lin L."/>
            <person name="Jiang Y."/>
            <person name="Duan X."/>
            <person name="Wei X."/>
        </authorList>
    </citation>
    <scope>BIOTECHNOLOGY</scope>
</reference>
<reference key="11">
    <citation type="journal article" date="2013" name="J. Am. Chem. Soc.">
        <title>Investigation of fungal iterative polyketide synthase functions using partially assembled intermediates.</title>
        <authorList>
            <person name="Gao Z."/>
            <person name="Wang J."/>
            <person name="Norquay A.K."/>
            <person name="Qiao K."/>
            <person name="Tang Y."/>
            <person name="Vederas J.C."/>
        </authorList>
    </citation>
    <scope>FUNCTION</scope>
    <scope>CATALYTIC ACTIVITY</scope>
</reference>
<reference key="12">
    <citation type="journal article" date="2015" name="Int. Immunopharmacol.">
        <title>Hypothemycin inhibits tumor necrosis factor-alpha production by tristetraprolin-dependent down-regulation of mRNA stability in lipopolysaccharide-stimulated macrophages.</title>
        <authorList>
            <person name="Park K.H."/>
            <person name="Yoon Y.D."/>
            <person name="Kang M.R."/>
            <person name="Yun J."/>
            <person name="Oh S.J."/>
            <person name="Lee C.W."/>
            <person name="Lee M.Y."/>
            <person name="Han S.B."/>
            <person name="Kim Y."/>
            <person name="Kang J.S."/>
        </authorList>
    </citation>
    <scope>BIOTECHNOLOGY</scope>
</reference>
<gene>
    <name evidence="17" type="primary">hpm8</name>
</gene>
<sequence length="2349" mass="253569">MPSTSNPSHVPVAIIGLACRFPGEATSPSKFWDLLKNGRDAYSPNTDRYNADAFYHPKASNRQNVLATKGGHFLKQDPYVFDAAFFNITAAEAISFDPKQRIAMEVVYEALENAGKTLPKVAGTQTACYIGSSMSDYRDAVVRDFGNSPKYHILGTCEEMISNRVSHFLDIHGPSATIHTACSSSLVATHLACQSLQSGESEMAIAGGVGMIITPDGNMHLNNLGFLNPEGHSRSFDENAGGYGRGEGCGILILKRLDRALEDGDSIRAVIRASGVNSDGWTQGVTMPSSQAQSALIKYVYESHGLDYGATQYVEAHGTGTKAGDPAEIGALHRTIGQGASKSRRLWIGSVKPNIGHLEAAAGVAGIIKGVLSMEHGMIPPNIYFSKPNPAIPLDEWNMAVPTKLTPWPASQTGRRMSVSGFGMGGTNGHVVLEAYKPQGKLTNGHTNGITNGIHKTRHSGKRLFVLSAQDQAGFKRLGNALVEHLDALGPAAATPEFLANLSHTLAVGRSGLAWRSSIIAESAPDLREKLATDPGEGAARSSGSEPRIGFVFTGQGAQWARMGVELLERPVFKASVIKSAETLKELGCEWDPIVELSKPQAESRLGVPEISQPICTVLQVALVDELKHWGVSPSKVVGHSSGEIGAAYSIGALSHRDAVAAAYFRGKSSNGAKKLGGGMMAVGCSREDADKLLSETKLKGGVATVACVNSPSSVTISGDAAALEELRVILEEKSVFARRLKVDVAYHSAHMNAVFAEYSAAIAHIEPAQAVEGGPIMVSSVTGSEVDSELLGPYYWTRNLISPVLFADAVKELVTPADGDGQNTVDLLIEIGPHSALGGPVEQILSHNGIKNVAYRSALTRGENAVDCSLKLAGELFLLGVPFELQKANGDSGSRMLTNLPPYPWNHSKSFRADSRLHREHLEQKFPTRSLIGAPVPMMAESEYTWRNFIRLADEPWLRGHTVGTTVLFPGAGIVSIILEAAQQLVDTGKTVRGFRMRDVNLFAAMALPEDLATEVIIHIRPHLISTVGSTAPGGWWEWTVSSCVGTDQLRDNARGLVAIDYEESRSEQINAEDKALVASQVADYHKILSECPEHYAHDKFYQHMTKASWSYGELFQGVENVRPGYGKTIFDIRVIDIGETFSKGQLERPFLINAATLDAVFQSWLGSTYNNGAFEFDKPFVPTSIGELEISVNIPGDGDYLMPGHCRSERYGFNELSADIAIFDKDLKNVFLSVKDFRTSELDMDSGKGDGDAAHVDPADINSEVKWNYALGLLKSEEITELVTKVASNDKLAELLRLTLHNNPAATVIELVSDESKISGASSAKLSKGLILPSQIRYVVVNPEAADADSFFKFFSLGEDGAPVAAERGPAELLIASSEVTDAAVLERLITLAKPDASILVAVNNKTTAAALSAKAFRVVTSIQDSKSIALYTSKKAPAADTSKLEAIILKPTTAQPAAQNFASILQKALELQGYSVVSQPWGTDIDVNDAKGKTYISLLELEQPLLDNLSKSDFENLRAVVLNCERLLWVTAGDNPSFGMVDGFARCIMSEIASTKFQVLHLSAATGLKYGSSLATRILQSDSTDNEYREVDGALQVARIFKSYNENESLRHHLEDTTSVVTLADQEDALRLTIGKPGLLDTLKFVPDERMLPPLQDHEVEIQVKATGLNFRDIMACMGLIPVRSLGQEASGIVLRTGAKATNFKPGDRVCTMNVGTHATKIRADYRVMTKIPDSMTFEEAASVAVVHTTAYYAFITIAKLRKGQSVLIHAAAGGVGQAAIQLAKHLGLITYVTVGTEDKRQLIREQYGIPDEHIFNSRDASFVKGVQRVTNGRGVDCVLNSLSGELLRASWGCLATFGHFIEIGLRDITNNMRLDMRPFRKSTSFTFINTHTLFEEDPAALGDILNESFKLMFAGALTAPSPLNAYPIGQVEEAFRTMQQGKHRGKMVLSFSDDAKAPVLRKAKDSLKLDPDATYLFVGGLGGLGRSLAKEFVASGARNIAFLSRSGDTTAQAKAIVDELAGQGIQVKAYRGDIASEASFLQAMEQCSQDLPPVKGVIQMAMVLRDIVFEKMSYDEWTVPVGPKVQGSWNLHKYFSHERPLDFMVICSSSSGIYGYPSQAQYAAGNTYQDALAHYRRSQGLNAISVNLGIMRDVGVLAETGTTGNIKLWEEVLGIREPAFHALMKSLINHQQRGSGDYPAQVCTGLGTADIMATHGLARPEYFNDPRFGPLAVTTVATDASADGQGSAVSLASRLSKVSTKDEAAEIITDALVNKTADILQMPPSEVDPGRPLYRYGVDSLVALEVRNWITREMKANMALLEILAAVPIESFAVKIAEKSKLVTV</sequence>